<proteinExistence type="inferred from homology"/>
<gene>
    <name evidence="1" type="primary">dadA</name>
    <name type="ordered locus">VV1_0414</name>
</gene>
<reference key="1">
    <citation type="submission" date="2002-12" db="EMBL/GenBank/DDBJ databases">
        <title>Complete genome sequence of Vibrio vulnificus CMCP6.</title>
        <authorList>
            <person name="Rhee J.H."/>
            <person name="Kim S.Y."/>
            <person name="Chung S.S."/>
            <person name="Kim J.J."/>
            <person name="Moon Y.H."/>
            <person name="Jeong H."/>
            <person name="Choy H.E."/>
        </authorList>
    </citation>
    <scope>NUCLEOTIDE SEQUENCE [LARGE SCALE GENOMIC DNA]</scope>
    <source>
        <strain>CMCP6</strain>
    </source>
</reference>
<keyword id="KW-0274">FAD</keyword>
<keyword id="KW-0285">Flavoprotein</keyword>
<keyword id="KW-0560">Oxidoreductase</keyword>
<sequence>MKAVVLGSGVVGLMSAWYLQKAGYQVTVVDRQARSAEETSFANAGQISYGYSSPWAAPGIPQKALRWLMEEHAPLKIKPSLDPQLLKWATQMLANCQLSRYQVNKARMLAIANHSRECLSQLRQEHDIEYQGRQQGTLQVFRTQKQLIAIEKDIALLEQSGTRYQRMSVDECIKQEPGLAAVSHKLTGGLYLPDDETGDCYLFCQQMTELAQQQGVTFLFNTNVKKVNTQGNQVVSVSTDAGELQADVYVVAMGSYSTALLAKLGITIPVYPVKGYSLTVPITDESQAPVSTVMDETYKVALTRFDDRIRVAGTAELAGFDPAIPEKRKATISMVVNDLFPHSGDFAKAEFWTGFRPMTPDGTPLIGKTPLKNLYTNTGHGTLGWTMACGSGHLLSQIITGEQSENPAGLDLFRYAS</sequence>
<feature type="chain" id="PRO_0000166153" description="D-amino acid dehydrogenase">
    <location>
        <begin position="1"/>
        <end position="417"/>
    </location>
</feature>
<feature type="binding site" evidence="1">
    <location>
        <begin position="3"/>
        <end position="17"/>
    </location>
    <ligand>
        <name>FAD</name>
        <dbReference type="ChEBI" id="CHEBI:57692"/>
    </ligand>
</feature>
<protein>
    <recommendedName>
        <fullName evidence="1">D-amino acid dehydrogenase</fullName>
        <ecNumber evidence="1">1.4.99.-</ecNumber>
    </recommendedName>
</protein>
<comment type="function">
    <text evidence="1">Oxidative deamination of D-amino acids.</text>
</comment>
<comment type="catalytic activity">
    <reaction evidence="1">
        <text>a D-alpha-amino acid + A + H2O = a 2-oxocarboxylate + AH2 + NH4(+)</text>
        <dbReference type="Rhea" id="RHEA:18125"/>
        <dbReference type="ChEBI" id="CHEBI:13193"/>
        <dbReference type="ChEBI" id="CHEBI:15377"/>
        <dbReference type="ChEBI" id="CHEBI:17499"/>
        <dbReference type="ChEBI" id="CHEBI:28938"/>
        <dbReference type="ChEBI" id="CHEBI:35179"/>
        <dbReference type="ChEBI" id="CHEBI:59871"/>
    </reaction>
</comment>
<comment type="cofactor">
    <cofactor evidence="1">
        <name>FAD</name>
        <dbReference type="ChEBI" id="CHEBI:57692"/>
    </cofactor>
</comment>
<comment type="similarity">
    <text evidence="1">Belongs to the DadA oxidoreductase family.</text>
</comment>
<accession>Q8DF11</accession>
<organism>
    <name type="scientific">Vibrio vulnificus (strain CMCP6)</name>
    <dbReference type="NCBI Taxonomy" id="216895"/>
    <lineage>
        <taxon>Bacteria</taxon>
        <taxon>Pseudomonadati</taxon>
        <taxon>Pseudomonadota</taxon>
        <taxon>Gammaproteobacteria</taxon>
        <taxon>Vibrionales</taxon>
        <taxon>Vibrionaceae</taxon>
        <taxon>Vibrio</taxon>
    </lineage>
</organism>
<dbReference type="EC" id="1.4.99.-" evidence="1"/>
<dbReference type="EMBL" id="AE016795">
    <property type="protein sequence ID" value="AAO08937.1"/>
    <property type="molecule type" value="Genomic_DNA"/>
</dbReference>
<dbReference type="RefSeq" id="WP_011078512.1">
    <property type="nucleotide sequence ID" value="NC_004459.3"/>
</dbReference>
<dbReference type="SMR" id="Q8DF11"/>
<dbReference type="KEGG" id="vvu:VV1_0414"/>
<dbReference type="HOGENOM" id="CLU_007884_9_2_6"/>
<dbReference type="Proteomes" id="UP000002275">
    <property type="component" value="Chromosome 1"/>
</dbReference>
<dbReference type="GO" id="GO:0005737">
    <property type="term" value="C:cytoplasm"/>
    <property type="evidence" value="ECO:0007669"/>
    <property type="project" value="TreeGrafter"/>
</dbReference>
<dbReference type="GO" id="GO:0005886">
    <property type="term" value="C:plasma membrane"/>
    <property type="evidence" value="ECO:0007669"/>
    <property type="project" value="TreeGrafter"/>
</dbReference>
<dbReference type="GO" id="GO:0008718">
    <property type="term" value="F:D-amino-acid dehydrogenase activity"/>
    <property type="evidence" value="ECO:0007669"/>
    <property type="project" value="UniProtKB-UniRule"/>
</dbReference>
<dbReference type="GO" id="GO:0055130">
    <property type="term" value="P:D-alanine catabolic process"/>
    <property type="evidence" value="ECO:0007669"/>
    <property type="project" value="TreeGrafter"/>
</dbReference>
<dbReference type="FunFam" id="3.50.50.60:FF:000020">
    <property type="entry name" value="D-amino acid dehydrogenase"/>
    <property type="match status" value="1"/>
</dbReference>
<dbReference type="Gene3D" id="3.30.9.10">
    <property type="entry name" value="D-Amino Acid Oxidase, subunit A, domain 2"/>
    <property type="match status" value="1"/>
</dbReference>
<dbReference type="Gene3D" id="3.50.50.60">
    <property type="entry name" value="FAD/NAD(P)-binding domain"/>
    <property type="match status" value="2"/>
</dbReference>
<dbReference type="HAMAP" id="MF_01202">
    <property type="entry name" value="DadA"/>
    <property type="match status" value="1"/>
</dbReference>
<dbReference type="InterPro" id="IPR023080">
    <property type="entry name" value="DadA"/>
</dbReference>
<dbReference type="InterPro" id="IPR006076">
    <property type="entry name" value="FAD-dep_OxRdtase"/>
</dbReference>
<dbReference type="InterPro" id="IPR036188">
    <property type="entry name" value="FAD/NAD-bd_sf"/>
</dbReference>
<dbReference type="NCBIfam" id="NF001933">
    <property type="entry name" value="PRK00711.1"/>
    <property type="match status" value="1"/>
</dbReference>
<dbReference type="PANTHER" id="PTHR13847:SF280">
    <property type="entry name" value="D-AMINO ACID DEHYDROGENASE"/>
    <property type="match status" value="1"/>
</dbReference>
<dbReference type="PANTHER" id="PTHR13847">
    <property type="entry name" value="SARCOSINE DEHYDROGENASE-RELATED"/>
    <property type="match status" value="1"/>
</dbReference>
<dbReference type="Pfam" id="PF01266">
    <property type="entry name" value="DAO"/>
    <property type="match status" value="1"/>
</dbReference>
<dbReference type="SUPFAM" id="SSF54373">
    <property type="entry name" value="FAD-linked reductases, C-terminal domain"/>
    <property type="match status" value="1"/>
</dbReference>
<dbReference type="SUPFAM" id="SSF51905">
    <property type="entry name" value="FAD/NAD(P)-binding domain"/>
    <property type="match status" value="1"/>
</dbReference>
<evidence type="ECO:0000255" key="1">
    <source>
        <dbReference type="HAMAP-Rule" id="MF_01202"/>
    </source>
</evidence>
<name>DADA_VIBVU</name>